<gene>
    <name evidence="1" type="primary">recO</name>
    <name type="ordered locus">Ldb1250</name>
</gene>
<sequence length="249" mass="27596">MAADLLDVHGLLFKRQQYKEADLLAKLWTKELGIVTVIAKGGMRPKSQLAAAVLPFTEGTFGILTRYKGISQLRTYKKLSQHDELFTDLDKNAYLSYLFDLADHAFSEYQKLGGYYDLLLVAFNRIVAGQDPEIIAQIVQLQLLDAFGVAPQLGACVICGKEKGIFDYSIAAGGVVCSDHFRSVSRLHLSPKATALIRTLALLPISRLGEIQIGEDLKKESRRAIAQIYQATVDLHLPSLRFLNEVRGS</sequence>
<dbReference type="EMBL" id="CR954253">
    <property type="protein sequence ID" value="CAI98052.1"/>
    <property type="molecule type" value="Genomic_DNA"/>
</dbReference>
<dbReference type="RefSeq" id="WP_003613030.1">
    <property type="nucleotide sequence ID" value="NZ_JQAV01000005.1"/>
</dbReference>
<dbReference type="SMR" id="Q1G9W7"/>
<dbReference type="STRING" id="390333.Ldb1250"/>
<dbReference type="KEGG" id="ldb:Ldb1250"/>
<dbReference type="PATRIC" id="fig|390333.13.peg.1658"/>
<dbReference type="eggNOG" id="COG1381">
    <property type="taxonomic scope" value="Bacteria"/>
</dbReference>
<dbReference type="HOGENOM" id="CLU_066632_4_0_9"/>
<dbReference type="BioCyc" id="LDEL390333:LDB_RS05325-MONOMER"/>
<dbReference type="Proteomes" id="UP000001259">
    <property type="component" value="Chromosome"/>
</dbReference>
<dbReference type="GO" id="GO:0043590">
    <property type="term" value="C:bacterial nucleoid"/>
    <property type="evidence" value="ECO:0007669"/>
    <property type="project" value="TreeGrafter"/>
</dbReference>
<dbReference type="GO" id="GO:0006310">
    <property type="term" value="P:DNA recombination"/>
    <property type="evidence" value="ECO:0007669"/>
    <property type="project" value="UniProtKB-UniRule"/>
</dbReference>
<dbReference type="GO" id="GO:0006302">
    <property type="term" value="P:double-strand break repair"/>
    <property type="evidence" value="ECO:0007669"/>
    <property type="project" value="TreeGrafter"/>
</dbReference>
<dbReference type="Gene3D" id="2.40.50.140">
    <property type="entry name" value="Nucleic acid-binding proteins"/>
    <property type="match status" value="1"/>
</dbReference>
<dbReference type="Gene3D" id="1.20.1440.120">
    <property type="entry name" value="Recombination protein O, C-terminal domain"/>
    <property type="match status" value="1"/>
</dbReference>
<dbReference type="Gene3D" id="6.20.220.20">
    <property type="entry name" value="Recombination protein O, zinc-binding domain"/>
    <property type="match status" value="1"/>
</dbReference>
<dbReference type="HAMAP" id="MF_00201">
    <property type="entry name" value="RecO"/>
    <property type="match status" value="1"/>
</dbReference>
<dbReference type="InterPro" id="IPR037278">
    <property type="entry name" value="ARFGAP/RecO"/>
</dbReference>
<dbReference type="InterPro" id="IPR022572">
    <property type="entry name" value="DNA_rep/recomb_RecO_N"/>
</dbReference>
<dbReference type="InterPro" id="IPR012340">
    <property type="entry name" value="NA-bd_OB-fold"/>
</dbReference>
<dbReference type="InterPro" id="IPR003717">
    <property type="entry name" value="RecO"/>
</dbReference>
<dbReference type="InterPro" id="IPR042242">
    <property type="entry name" value="RecO_C"/>
</dbReference>
<dbReference type="NCBIfam" id="TIGR00613">
    <property type="entry name" value="reco"/>
    <property type="match status" value="1"/>
</dbReference>
<dbReference type="PANTHER" id="PTHR33991">
    <property type="entry name" value="DNA REPAIR PROTEIN RECO"/>
    <property type="match status" value="1"/>
</dbReference>
<dbReference type="PANTHER" id="PTHR33991:SF1">
    <property type="entry name" value="DNA REPAIR PROTEIN RECO"/>
    <property type="match status" value="1"/>
</dbReference>
<dbReference type="Pfam" id="PF02565">
    <property type="entry name" value="RecO_C"/>
    <property type="match status" value="1"/>
</dbReference>
<dbReference type="Pfam" id="PF11967">
    <property type="entry name" value="RecO_N"/>
    <property type="match status" value="1"/>
</dbReference>
<dbReference type="SUPFAM" id="SSF57863">
    <property type="entry name" value="ArfGap/RecO-like zinc finger"/>
    <property type="match status" value="1"/>
</dbReference>
<dbReference type="SUPFAM" id="SSF50249">
    <property type="entry name" value="Nucleic acid-binding proteins"/>
    <property type="match status" value="1"/>
</dbReference>
<name>RECO_LACDA</name>
<comment type="function">
    <text evidence="1">Involved in DNA repair and RecF pathway recombination.</text>
</comment>
<comment type="similarity">
    <text evidence="1">Belongs to the RecO family.</text>
</comment>
<organism>
    <name type="scientific">Lactobacillus delbrueckii subsp. bulgaricus (strain ATCC 11842 / DSM 20081 / BCRC 10696 / JCM 1002 / NBRC 13953 / NCIMB 11778 / NCTC 12712 / WDCM 00102 / Lb 14)</name>
    <dbReference type="NCBI Taxonomy" id="390333"/>
    <lineage>
        <taxon>Bacteria</taxon>
        <taxon>Bacillati</taxon>
        <taxon>Bacillota</taxon>
        <taxon>Bacilli</taxon>
        <taxon>Lactobacillales</taxon>
        <taxon>Lactobacillaceae</taxon>
        <taxon>Lactobacillus</taxon>
    </lineage>
</organism>
<proteinExistence type="inferred from homology"/>
<protein>
    <recommendedName>
        <fullName evidence="1">DNA repair protein RecO</fullName>
    </recommendedName>
    <alternativeName>
        <fullName evidence="1">Recombination protein O</fullName>
    </alternativeName>
</protein>
<feature type="chain" id="PRO_0000264820" description="DNA repair protein RecO">
    <location>
        <begin position="1"/>
        <end position="249"/>
    </location>
</feature>
<reference key="1">
    <citation type="journal article" date="2006" name="Proc. Natl. Acad. Sci. U.S.A.">
        <title>The complete genome sequence of Lactobacillus bulgaricus reveals extensive and ongoing reductive evolution.</title>
        <authorList>
            <person name="van de Guchte M."/>
            <person name="Penaud S."/>
            <person name="Grimaldi C."/>
            <person name="Barbe V."/>
            <person name="Bryson K."/>
            <person name="Nicolas P."/>
            <person name="Robert C."/>
            <person name="Oztas S."/>
            <person name="Mangenot S."/>
            <person name="Couloux A."/>
            <person name="Loux V."/>
            <person name="Dervyn R."/>
            <person name="Bossy R."/>
            <person name="Bolotin A."/>
            <person name="Batto J.-M."/>
            <person name="Walunas T."/>
            <person name="Gibrat J.-F."/>
            <person name="Bessieres P."/>
            <person name="Weissenbach J."/>
            <person name="Ehrlich S.D."/>
            <person name="Maguin E."/>
        </authorList>
    </citation>
    <scope>NUCLEOTIDE SEQUENCE [LARGE SCALE GENOMIC DNA]</scope>
    <source>
        <strain>ATCC 11842 / DSM 20081 / BCRC 10696 / JCM 1002 / NBRC 13953 / NCIMB 11778 / NCTC 12712 / WDCM 00102 / Lb 14</strain>
    </source>
</reference>
<evidence type="ECO:0000255" key="1">
    <source>
        <dbReference type="HAMAP-Rule" id="MF_00201"/>
    </source>
</evidence>
<keyword id="KW-0227">DNA damage</keyword>
<keyword id="KW-0233">DNA recombination</keyword>
<keyword id="KW-0234">DNA repair</keyword>
<keyword id="KW-1185">Reference proteome</keyword>
<accession>Q1G9W7</accession>